<accession>P18689</accession>
<keyword id="KW-0903">Direct protein sequencing</keyword>
<protein>
    <recommendedName>
        <fullName>Prolamin alpha-1</fullName>
    </recommendedName>
</protein>
<feature type="chain" id="PRO_0000102595" description="Prolamin alpha-1">
    <location>
        <begin position="1"/>
        <end position="29" status="greater than"/>
    </location>
</feature>
<feature type="non-terminal residue">
    <location>
        <position position="29"/>
    </location>
</feature>
<reference key="1">
    <citation type="journal article" date="1986" name="Biokhimiia">
        <title>Characterization of the N-terminal amino acid sequence of alpha-prolamine from Dactylis glomerata L.</title>
        <authorList>
            <person name="Vvedenskaya I.O."/>
            <person name="Shlyapnikov S.V."/>
            <person name="Konarev A.V."/>
        </authorList>
    </citation>
    <scope>PROTEIN SEQUENCE</scope>
</reference>
<dbReference type="PIR" id="S02200">
    <property type="entry name" value="S02200"/>
</dbReference>
<organism>
    <name type="scientific">Dactylis glomerata</name>
    <name type="common">Orchard grass</name>
    <name type="synonym">Cock's-foot grass</name>
    <dbReference type="NCBI Taxonomy" id="4509"/>
    <lineage>
        <taxon>Eukaryota</taxon>
        <taxon>Viridiplantae</taxon>
        <taxon>Streptophyta</taxon>
        <taxon>Embryophyta</taxon>
        <taxon>Tracheophyta</taxon>
        <taxon>Spermatophyta</taxon>
        <taxon>Magnoliopsida</taxon>
        <taxon>Liliopsida</taxon>
        <taxon>Poales</taxon>
        <taxon>Poaceae</taxon>
        <taxon>BOP clade</taxon>
        <taxon>Pooideae</taxon>
        <taxon>Poodae</taxon>
        <taxon>Poeae</taxon>
        <taxon>Poeae Chloroplast Group 2 (Poeae type)</taxon>
        <taxon>Loliodinae</taxon>
        <taxon>Dactylidinae</taxon>
        <taxon>Dactylis</taxon>
    </lineage>
</organism>
<name>PRO1_DACGL</name>
<sequence>NVQLDPFFQEQQQYYPQQQAFFLLQQQQN</sequence>
<proteinExistence type="evidence at protein level"/>